<protein>
    <recommendedName>
        <fullName evidence="2">Elongation factor Tu</fullName>
        <shortName evidence="2">EF-Tu</shortName>
        <ecNumber evidence="2">3.6.5.3</ecNumber>
    </recommendedName>
</protein>
<gene>
    <name evidence="2" type="primary">tuf</name>
    <name type="ordered locus">Csac_0958</name>
</gene>
<sequence>MAKAKFERTKPHVNIGTIGHVDHGKTTLTAAITKVLALKGKAQFMAYDQIDKAPEERERGITINTAHVEYETDARHYAHVDCPGHADYVKNMITGAAQMDGAILVVSAADGPMPQTREHILLARQVNVPYIVVFLNKVDMVDDPELIELVEMEVRELLSKYGYPGDEVPIVKGSALKALESPSQDPNAPEYQCILELMDVVDKYIPTPQRDVDKPFLMPIEDVFSITGRGTVVTGRVERGTLKTGEEVEIVGFAPEPRKTVVTGIEMFRKVLDEAVAGDNVGCLLRGIQKNEVERGQVLAKPGTIKPHTKFKAQVYVLTKEEGGRHTPFFNGYRPQFYFRTTDVTGTITLPEGVEMCMPGDNVEMTVELISPIAIESGLRFAIREGGRTVGAGSVTTIIE</sequence>
<comment type="function">
    <text evidence="2">GTP hydrolase that promotes the GTP-dependent binding of aminoacyl-tRNA to the A-site of ribosomes during protein biosynthesis.</text>
</comment>
<comment type="catalytic activity">
    <reaction evidence="2">
        <text>GTP + H2O = GDP + phosphate + H(+)</text>
        <dbReference type="Rhea" id="RHEA:19669"/>
        <dbReference type="ChEBI" id="CHEBI:15377"/>
        <dbReference type="ChEBI" id="CHEBI:15378"/>
        <dbReference type="ChEBI" id="CHEBI:37565"/>
        <dbReference type="ChEBI" id="CHEBI:43474"/>
        <dbReference type="ChEBI" id="CHEBI:58189"/>
        <dbReference type="EC" id="3.6.5.3"/>
    </reaction>
    <physiologicalReaction direction="left-to-right" evidence="2">
        <dbReference type="Rhea" id="RHEA:19670"/>
    </physiologicalReaction>
</comment>
<comment type="subunit">
    <text evidence="2">Monomer.</text>
</comment>
<comment type="subcellular location">
    <subcellularLocation>
        <location evidence="2">Cytoplasm</location>
    </subcellularLocation>
</comment>
<comment type="similarity">
    <text evidence="2">Belongs to the TRAFAC class translation factor GTPase superfamily. Classic translation factor GTPase family. EF-Tu/EF-1A subfamily.</text>
</comment>
<keyword id="KW-0963">Cytoplasm</keyword>
<keyword id="KW-0251">Elongation factor</keyword>
<keyword id="KW-0342">GTP-binding</keyword>
<keyword id="KW-0378">Hydrolase</keyword>
<keyword id="KW-0460">Magnesium</keyword>
<keyword id="KW-0479">Metal-binding</keyword>
<keyword id="KW-0547">Nucleotide-binding</keyword>
<keyword id="KW-0648">Protein biosynthesis</keyword>
<dbReference type="EC" id="3.6.5.3" evidence="2"/>
<dbReference type="EMBL" id="CP000679">
    <property type="protein sequence ID" value="ABP66572.1"/>
    <property type="molecule type" value="Genomic_DNA"/>
</dbReference>
<dbReference type="RefSeq" id="WP_011916518.1">
    <property type="nucleotide sequence ID" value="NC_009437.1"/>
</dbReference>
<dbReference type="SMR" id="A4XI37"/>
<dbReference type="STRING" id="351627.Csac_0958"/>
<dbReference type="KEGG" id="csc:Csac_0958"/>
<dbReference type="eggNOG" id="COG0050">
    <property type="taxonomic scope" value="Bacteria"/>
</dbReference>
<dbReference type="HOGENOM" id="CLU_007265_0_1_9"/>
<dbReference type="OrthoDB" id="9804504at2"/>
<dbReference type="Proteomes" id="UP000000256">
    <property type="component" value="Chromosome"/>
</dbReference>
<dbReference type="GO" id="GO:0005829">
    <property type="term" value="C:cytosol"/>
    <property type="evidence" value="ECO:0007669"/>
    <property type="project" value="TreeGrafter"/>
</dbReference>
<dbReference type="GO" id="GO:0005525">
    <property type="term" value="F:GTP binding"/>
    <property type="evidence" value="ECO:0007669"/>
    <property type="project" value="UniProtKB-UniRule"/>
</dbReference>
<dbReference type="GO" id="GO:0003924">
    <property type="term" value="F:GTPase activity"/>
    <property type="evidence" value="ECO:0007669"/>
    <property type="project" value="InterPro"/>
</dbReference>
<dbReference type="GO" id="GO:0003746">
    <property type="term" value="F:translation elongation factor activity"/>
    <property type="evidence" value="ECO:0007669"/>
    <property type="project" value="UniProtKB-UniRule"/>
</dbReference>
<dbReference type="CDD" id="cd01884">
    <property type="entry name" value="EF_Tu"/>
    <property type="match status" value="1"/>
</dbReference>
<dbReference type="CDD" id="cd03697">
    <property type="entry name" value="EFTU_II"/>
    <property type="match status" value="1"/>
</dbReference>
<dbReference type="CDD" id="cd03707">
    <property type="entry name" value="EFTU_III"/>
    <property type="match status" value="1"/>
</dbReference>
<dbReference type="FunFam" id="2.40.30.10:FF:000002">
    <property type="entry name" value="Elongation factor Tu"/>
    <property type="match status" value="1"/>
</dbReference>
<dbReference type="FunFam" id="3.40.50.300:FF:000003">
    <property type="entry name" value="Elongation factor Tu"/>
    <property type="match status" value="1"/>
</dbReference>
<dbReference type="FunFam" id="2.40.30.10:FF:000020">
    <property type="entry name" value="Translation elongation factor EF-1"/>
    <property type="match status" value="1"/>
</dbReference>
<dbReference type="Gene3D" id="3.40.50.300">
    <property type="entry name" value="P-loop containing nucleotide triphosphate hydrolases"/>
    <property type="match status" value="1"/>
</dbReference>
<dbReference type="Gene3D" id="2.40.30.10">
    <property type="entry name" value="Translation factors"/>
    <property type="match status" value="2"/>
</dbReference>
<dbReference type="HAMAP" id="MF_00118_B">
    <property type="entry name" value="EF_Tu_B"/>
    <property type="match status" value="1"/>
</dbReference>
<dbReference type="InterPro" id="IPR041709">
    <property type="entry name" value="EF-Tu_GTP-bd"/>
</dbReference>
<dbReference type="InterPro" id="IPR050055">
    <property type="entry name" value="EF-Tu_GTPase"/>
</dbReference>
<dbReference type="InterPro" id="IPR004161">
    <property type="entry name" value="EFTu-like_2"/>
</dbReference>
<dbReference type="InterPro" id="IPR033720">
    <property type="entry name" value="EFTU_2"/>
</dbReference>
<dbReference type="InterPro" id="IPR031157">
    <property type="entry name" value="G_TR_CS"/>
</dbReference>
<dbReference type="InterPro" id="IPR027417">
    <property type="entry name" value="P-loop_NTPase"/>
</dbReference>
<dbReference type="InterPro" id="IPR005225">
    <property type="entry name" value="Small_GTP-bd"/>
</dbReference>
<dbReference type="InterPro" id="IPR000795">
    <property type="entry name" value="T_Tr_GTP-bd_dom"/>
</dbReference>
<dbReference type="InterPro" id="IPR009000">
    <property type="entry name" value="Transl_B-barrel_sf"/>
</dbReference>
<dbReference type="InterPro" id="IPR009001">
    <property type="entry name" value="Transl_elong_EF1A/Init_IF2_C"/>
</dbReference>
<dbReference type="InterPro" id="IPR004541">
    <property type="entry name" value="Transl_elong_EFTu/EF1A_bac/org"/>
</dbReference>
<dbReference type="InterPro" id="IPR004160">
    <property type="entry name" value="Transl_elong_EFTu/EF1A_C"/>
</dbReference>
<dbReference type="NCBIfam" id="TIGR00485">
    <property type="entry name" value="EF-Tu"/>
    <property type="match status" value="1"/>
</dbReference>
<dbReference type="NCBIfam" id="NF000766">
    <property type="entry name" value="PRK00049.1"/>
    <property type="match status" value="1"/>
</dbReference>
<dbReference type="NCBIfam" id="NF009372">
    <property type="entry name" value="PRK12735.1"/>
    <property type="match status" value="1"/>
</dbReference>
<dbReference type="NCBIfam" id="NF009373">
    <property type="entry name" value="PRK12736.1"/>
    <property type="match status" value="1"/>
</dbReference>
<dbReference type="NCBIfam" id="TIGR00231">
    <property type="entry name" value="small_GTP"/>
    <property type="match status" value="1"/>
</dbReference>
<dbReference type="PANTHER" id="PTHR43721:SF22">
    <property type="entry name" value="ELONGATION FACTOR TU, MITOCHONDRIAL"/>
    <property type="match status" value="1"/>
</dbReference>
<dbReference type="PANTHER" id="PTHR43721">
    <property type="entry name" value="ELONGATION FACTOR TU-RELATED"/>
    <property type="match status" value="1"/>
</dbReference>
<dbReference type="Pfam" id="PF00009">
    <property type="entry name" value="GTP_EFTU"/>
    <property type="match status" value="1"/>
</dbReference>
<dbReference type="Pfam" id="PF03144">
    <property type="entry name" value="GTP_EFTU_D2"/>
    <property type="match status" value="1"/>
</dbReference>
<dbReference type="Pfam" id="PF03143">
    <property type="entry name" value="GTP_EFTU_D3"/>
    <property type="match status" value="1"/>
</dbReference>
<dbReference type="PRINTS" id="PR00315">
    <property type="entry name" value="ELONGATNFCT"/>
</dbReference>
<dbReference type="SUPFAM" id="SSF50465">
    <property type="entry name" value="EF-Tu/eEF-1alpha/eIF2-gamma C-terminal domain"/>
    <property type="match status" value="1"/>
</dbReference>
<dbReference type="SUPFAM" id="SSF52540">
    <property type="entry name" value="P-loop containing nucleoside triphosphate hydrolases"/>
    <property type="match status" value="1"/>
</dbReference>
<dbReference type="SUPFAM" id="SSF50447">
    <property type="entry name" value="Translation proteins"/>
    <property type="match status" value="1"/>
</dbReference>
<dbReference type="PROSITE" id="PS00301">
    <property type="entry name" value="G_TR_1"/>
    <property type="match status" value="1"/>
</dbReference>
<dbReference type="PROSITE" id="PS51722">
    <property type="entry name" value="G_TR_2"/>
    <property type="match status" value="1"/>
</dbReference>
<evidence type="ECO:0000250" key="1"/>
<evidence type="ECO:0000255" key="2">
    <source>
        <dbReference type="HAMAP-Rule" id="MF_00118"/>
    </source>
</evidence>
<reference key="1">
    <citation type="submission" date="2007-04" db="EMBL/GenBank/DDBJ databases">
        <title>Genome sequence of the thermophilic hydrogen-producing bacterium Caldicellulosiruptor saccharolyticus DSM 8903.</title>
        <authorList>
            <person name="Copeland A."/>
            <person name="Lucas S."/>
            <person name="Lapidus A."/>
            <person name="Barry K."/>
            <person name="Detter J.C."/>
            <person name="Glavina del Rio T."/>
            <person name="Hammon N."/>
            <person name="Israni S."/>
            <person name="Dalin E."/>
            <person name="Tice H."/>
            <person name="Pitluck S."/>
            <person name="Kiss H."/>
            <person name="Brettin T."/>
            <person name="Bruce D."/>
            <person name="Han C."/>
            <person name="Schmutz J."/>
            <person name="Larimer F."/>
            <person name="Land M."/>
            <person name="Hauser L."/>
            <person name="Kyrpides N."/>
            <person name="Lykidis A."/>
            <person name="van de Werken H.J.G."/>
            <person name="Verhaart M.R.A."/>
            <person name="VanFossen A.L."/>
            <person name="Lewis D.L."/>
            <person name="Nichols J.D."/>
            <person name="Goorissen H.P."/>
            <person name="van Niel E.W.J."/>
            <person name="Stams F.J.M."/>
            <person name="Willquist K.U."/>
            <person name="Ward D.E."/>
            <person name="van der Oost J."/>
            <person name="Kelly R.M."/>
            <person name="Kengen S.M.W."/>
            <person name="Richardson P."/>
        </authorList>
    </citation>
    <scope>NUCLEOTIDE SEQUENCE [LARGE SCALE GENOMIC DNA]</scope>
    <source>
        <strain>ATCC 43494 / DSM 8903 / Tp8T 6331</strain>
    </source>
</reference>
<name>EFTU_CALS8</name>
<proteinExistence type="inferred from homology"/>
<organism>
    <name type="scientific">Caldicellulosiruptor saccharolyticus (strain ATCC 43494 / DSM 8903 / Tp8T 6331)</name>
    <dbReference type="NCBI Taxonomy" id="351627"/>
    <lineage>
        <taxon>Bacteria</taxon>
        <taxon>Bacillati</taxon>
        <taxon>Bacillota</taxon>
        <taxon>Bacillota incertae sedis</taxon>
        <taxon>Caldicellulosiruptorales</taxon>
        <taxon>Caldicellulosiruptoraceae</taxon>
        <taxon>Caldicellulosiruptor</taxon>
    </lineage>
</organism>
<accession>A4XI37</accession>
<feature type="chain" id="PRO_1000015625" description="Elongation factor Tu">
    <location>
        <begin position="1"/>
        <end position="400"/>
    </location>
</feature>
<feature type="domain" description="tr-type G">
    <location>
        <begin position="10"/>
        <end position="209"/>
    </location>
</feature>
<feature type="region of interest" description="G1" evidence="1">
    <location>
        <begin position="19"/>
        <end position="26"/>
    </location>
</feature>
<feature type="region of interest" description="G2" evidence="1">
    <location>
        <begin position="60"/>
        <end position="64"/>
    </location>
</feature>
<feature type="region of interest" description="G3" evidence="1">
    <location>
        <begin position="81"/>
        <end position="84"/>
    </location>
</feature>
<feature type="region of interest" description="G4" evidence="1">
    <location>
        <begin position="136"/>
        <end position="139"/>
    </location>
</feature>
<feature type="region of interest" description="G5" evidence="1">
    <location>
        <begin position="174"/>
        <end position="176"/>
    </location>
</feature>
<feature type="binding site" evidence="2">
    <location>
        <begin position="19"/>
        <end position="26"/>
    </location>
    <ligand>
        <name>GTP</name>
        <dbReference type="ChEBI" id="CHEBI:37565"/>
    </ligand>
</feature>
<feature type="binding site" evidence="2">
    <location>
        <position position="26"/>
    </location>
    <ligand>
        <name>Mg(2+)</name>
        <dbReference type="ChEBI" id="CHEBI:18420"/>
    </ligand>
</feature>
<feature type="binding site" evidence="2">
    <location>
        <begin position="81"/>
        <end position="85"/>
    </location>
    <ligand>
        <name>GTP</name>
        <dbReference type="ChEBI" id="CHEBI:37565"/>
    </ligand>
</feature>
<feature type="binding site" evidence="2">
    <location>
        <begin position="136"/>
        <end position="139"/>
    </location>
    <ligand>
        <name>GTP</name>
        <dbReference type="ChEBI" id="CHEBI:37565"/>
    </ligand>
</feature>